<protein>
    <recommendedName>
        <fullName evidence="8">Endothelin receptor type B</fullName>
        <shortName>ET-B</shortName>
        <shortName>ET-BR</shortName>
    </recommendedName>
    <alternativeName>
        <fullName>Endothelin receptor non-selective type</fullName>
    </alternativeName>
</protein>
<organism>
    <name type="scientific">Equus caballus</name>
    <name type="common">Horse</name>
    <dbReference type="NCBI Taxonomy" id="9796"/>
    <lineage>
        <taxon>Eukaryota</taxon>
        <taxon>Metazoa</taxon>
        <taxon>Chordata</taxon>
        <taxon>Craniata</taxon>
        <taxon>Vertebrata</taxon>
        <taxon>Euteleostomi</taxon>
        <taxon>Mammalia</taxon>
        <taxon>Eutheria</taxon>
        <taxon>Laurasiatheria</taxon>
        <taxon>Perissodactyla</taxon>
        <taxon>Equidae</taxon>
        <taxon>Equus</taxon>
    </lineage>
</organism>
<evidence type="ECO:0000250" key="1">
    <source>
        <dbReference type="UniProtKB" id="P24530"/>
    </source>
</evidence>
<evidence type="ECO:0000250" key="2">
    <source>
        <dbReference type="UniProtKB" id="P28088"/>
    </source>
</evidence>
<evidence type="ECO:0000255" key="3"/>
<evidence type="ECO:0000255" key="4">
    <source>
        <dbReference type="PROSITE-ProRule" id="PRU00521"/>
    </source>
</evidence>
<evidence type="ECO:0000256" key="5">
    <source>
        <dbReference type="SAM" id="MobiDB-lite"/>
    </source>
</evidence>
<evidence type="ECO:0000269" key="6">
    <source>
    </source>
</evidence>
<evidence type="ECO:0000269" key="7">
    <source>
    </source>
</evidence>
<evidence type="ECO:0000305" key="8"/>
<feature type="signal peptide" evidence="3">
    <location>
        <begin position="1"/>
        <end position="26"/>
    </location>
</feature>
<feature type="chain" id="PRO_0000012728" description="Endothelin receptor type B">
    <location>
        <begin position="27"/>
        <end position="443"/>
    </location>
</feature>
<feature type="topological domain" description="Extracellular" evidence="3">
    <location>
        <begin position="27"/>
        <end position="102"/>
    </location>
</feature>
<feature type="transmembrane region" description="Helical; Name=1" evidence="3">
    <location>
        <begin position="103"/>
        <end position="127"/>
    </location>
</feature>
<feature type="topological domain" description="Cytoplasmic" evidence="3">
    <location>
        <begin position="128"/>
        <end position="138"/>
    </location>
</feature>
<feature type="transmembrane region" description="Helical; Name=2" evidence="3">
    <location>
        <begin position="139"/>
        <end position="164"/>
    </location>
</feature>
<feature type="topological domain" description="Extracellular" evidence="3">
    <location>
        <begin position="165"/>
        <end position="176"/>
    </location>
</feature>
<feature type="transmembrane region" description="Helical; Name=3" evidence="3">
    <location>
        <begin position="177"/>
        <end position="198"/>
    </location>
</feature>
<feature type="topological domain" description="Cytoplasmic" evidence="3">
    <location>
        <begin position="199"/>
        <end position="219"/>
    </location>
</feature>
<feature type="transmembrane region" description="Helical; Name=4" evidence="3">
    <location>
        <begin position="220"/>
        <end position="244"/>
    </location>
</feature>
<feature type="topological domain" description="Extracellular" evidence="3">
    <location>
        <begin position="245"/>
        <end position="272"/>
    </location>
</feature>
<feature type="transmembrane region" description="Helical; Name=5" evidence="3">
    <location>
        <begin position="273"/>
        <end position="297"/>
    </location>
</feature>
<feature type="topological domain" description="Cytoplasmic" evidence="3">
    <location>
        <begin position="298"/>
        <end position="325"/>
    </location>
</feature>
<feature type="transmembrane region" description="Helical; Name=6" evidence="3">
    <location>
        <begin position="326"/>
        <end position="351"/>
    </location>
</feature>
<feature type="topological domain" description="Extracellular" evidence="3">
    <location>
        <begin position="352"/>
        <end position="363"/>
    </location>
</feature>
<feature type="transmembrane region" description="Helical; Name=7" evidence="3">
    <location>
        <begin position="364"/>
        <end position="390"/>
    </location>
</feature>
<feature type="topological domain" description="Cytoplasmic" evidence="3">
    <location>
        <begin position="391"/>
        <end position="443"/>
    </location>
</feature>
<feature type="region of interest" description="Disordered" evidence="5">
    <location>
        <begin position="51"/>
        <end position="89"/>
    </location>
</feature>
<feature type="compositionally biased region" description="Polar residues" evidence="5">
    <location>
        <begin position="51"/>
        <end position="62"/>
    </location>
</feature>
<feature type="modified residue" description="Phosphoserine" evidence="2">
    <location>
        <position position="306"/>
    </location>
</feature>
<feature type="modified residue" description="Phosphoserine" evidence="2">
    <location>
        <position position="420"/>
    </location>
</feature>
<feature type="modified residue" description="Phosphotyrosine" evidence="2">
    <location>
        <position position="440"/>
    </location>
</feature>
<feature type="modified residue" description="Phosphoserine" evidence="2">
    <location>
        <position position="441"/>
    </location>
</feature>
<feature type="modified residue" description="Phosphoserine" evidence="2">
    <location>
        <position position="442"/>
    </location>
</feature>
<feature type="modified residue" description="Phosphoserine" evidence="2">
    <location>
        <position position="443"/>
    </location>
</feature>
<feature type="lipid moiety-binding region" description="S-palmitoyl cysteine" evidence="3">
    <location>
        <position position="403"/>
    </location>
</feature>
<feature type="lipid moiety-binding region" description="S-palmitoyl cysteine" evidence="3">
    <location>
        <position position="404"/>
    </location>
</feature>
<feature type="lipid moiety-binding region" description="S-palmitoyl cysteine" evidence="3">
    <location>
        <position position="406"/>
    </location>
</feature>
<feature type="glycosylation site" description="N-linked (GlcNAc...) asparagine" evidence="3">
    <location>
        <position position="60"/>
    </location>
</feature>
<feature type="disulfide bond" evidence="4">
    <location>
        <begin position="175"/>
        <end position="256"/>
    </location>
</feature>
<feature type="sequence variant" description="In OLWS." evidence="6 7">
    <original>I</original>
    <variation>K</variation>
    <location>
        <position position="126"/>
    </location>
</feature>
<feature type="sequence conflict" description="In Ref. 2; AAC23486." evidence="8" ref="2">
    <original>V</original>
    <variation>A</variation>
    <location>
        <position position="11"/>
    </location>
</feature>
<feature type="sequence conflict" description="In Ref. 2; AAC23486." evidence="8" ref="2">
    <original>FE</original>
    <variation>SG</variation>
    <location>
        <begin position="43"/>
        <end position="44"/>
    </location>
</feature>
<feature type="sequence conflict" description="In Ref. 2; AAC23486." evidence="8" ref="2">
    <original>PRL</original>
    <variation>QRS</variation>
    <location>
        <begin position="64"/>
        <end position="66"/>
    </location>
</feature>
<feature type="sequence conflict" description="In Ref. 2; AAC23486." evidence="8" ref="2">
    <original>A</original>
    <variation>E</variation>
    <location>
        <position position="79"/>
    </location>
</feature>
<feature type="sequence conflict" description="In Ref. 2; AAC23486." evidence="8" ref="2">
    <original>E</original>
    <variation>D</variation>
    <location>
        <position position="92"/>
    </location>
</feature>
<feature type="sequence conflict" description="In Ref. 2; AAC23486." evidence="8" ref="2">
    <original>E</original>
    <variation>M</variation>
    <location>
        <position position="297"/>
    </location>
</feature>
<feature type="sequence conflict" description="In Ref. 2; AAC23486." evidence="8" ref="2">
    <original>E</original>
    <variation>D</variation>
    <location>
        <position position="369"/>
    </location>
</feature>
<feature type="sequence conflict" description="In Ref. 2; AAC23486." evidence="8" ref="2">
    <original>W</original>
    <variation>S</variation>
    <location>
        <position position="400"/>
    </location>
</feature>
<gene>
    <name type="primary">EDNRB</name>
</gene>
<proteinExistence type="evidence at protein level"/>
<reference key="1">
    <citation type="journal article" date="1998" name="Hum. Mol. Genet.">
        <title>A dinucleotide mutation in the endothelin-B receptor gene is associated with lethal white foal syndrome (LWFS); a horse variant of Hirschsprung disease.</title>
        <authorList>
            <person name="Yang G.C."/>
            <person name="Croaker D."/>
            <person name="Zhang A.L."/>
            <person name="Manglick P."/>
            <person name="Cartmill T."/>
            <person name="Cass D."/>
        </authorList>
    </citation>
    <scope>NUCLEOTIDE SEQUENCE [MRNA]</scope>
    <scope>VARIANT OLWS LYS-126</scope>
    <source>
        <tissue>Liver</tissue>
    </source>
</reference>
<reference key="2">
    <citation type="journal article" date="1998" name="Mamm. Genome">
        <title>Endothelin receptor B polymorphism associated with lethal white foal syndrome in horses.</title>
        <authorList>
            <person name="Santschi E.M."/>
            <person name="Purdy A.K."/>
            <person name="Valberg S.J."/>
            <person name="Vrotsos P.D."/>
            <person name="Kaese H."/>
            <person name="Mickelson J.R."/>
        </authorList>
    </citation>
    <scope>NUCLEOTIDE SEQUENCE [MRNA] OF 8-443</scope>
    <scope>VARIANT OLWS LYS-126</scope>
</reference>
<keyword id="KW-1003">Cell membrane</keyword>
<keyword id="KW-0225">Disease variant</keyword>
<keyword id="KW-1015">Disulfide bond</keyword>
<keyword id="KW-0297">G-protein coupled receptor</keyword>
<keyword id="KW-0325">Glycoprotein</keyword>
<keyword id="KW-0449">Lipoprotein</keyword>
<keyword id="KW-0472">Membrane</keyword>
<keyword id="KW-0564">Palmitate</keyword>
<keyword id="KW-0597">Phosphoprotein</keyword>
<keyword id="KW-0675">Receptor</keyword>
<keyword id="KW-1185">Reference proteome</keyword>
<keyword id="KW-0732">Signal</keyword>
<keyword id="KW-0807">Transducer</keyword>
<keyword id="KW-0812">Transmembrane</keyword>
<keyword id="KW-1133">Transmembrane helix</keyword>
<accession>O62709</accession>
<accession>O77508</accession>
<sequence length="443" mass="50006">MQPLPTLCGRVLVALILACGVAGVQGEERRFPPARATPPLLGFEEIMTPPTKTSWPTGSNASVPRLSAPPQMPKAGRTAGAQRRTLPPPPCERTIEIKETFKYINTVVSCLVFVLGIIGNSTLLRIIYKNKCMRNGPNILIASLALGDLLHIIIDIPINVYKLLAEDWPFGVEMCKLVPFIQKASVGITVLSLCALSIDRYRAVASWSRIKGIGVPKWTAVEIVLIWVVSVVLAVPEAVGFDMITADYKGSYLRICLLHPTQKTAFMQFYKNAKDWWLFSFYFCLPLAITAFFYTLETCEMLRKKSGMQIALNDHLKQRREVAKTVFCLVLVFALCWLPLHLSRILKHTLYDQNDPHRCELLSFLLVLEYIGINMASLNSCINPIALYLVSKRFKNCFKWCLCCWCQSFEEKQSLEDKQSCLKFKANDHGYDNFRSSNKYSSS</sequence>
<dbReference type="EMBL" id="AF019072">
    <property type="protein sequence ID" value="AAC25983.1"/>
    <property type="molecule type" value="mRNA"/>
</dbReference>
<dbReference type="EMBL" id="AF038900">
    <property type="protein sequence ID" value="AAC23486.1"/>
    <property type="molecule type" value="mRNA"/>
</dbReference>
<dbReference type="RefSeq" id="NP_001075306.2">
    <property type="nucleotide sequence ID" value="NM_001081837.2"/>
</dbReference>
<dbReference type="SMR" id="O62709"/>
<dbReference type="FunCoup" id="O62709">
    <property type="interactions" value="374"/>
</dbReference>
<dbReference type="STRING" id="9796.ENSECAP00000037052"/>
<dbReference type="GlyCosmos" id="O62709">
    <property type="glycosylation" value="1 site, No reported glycans"/>
</dbReference>
<dbReference type="PaxDb" id="9796-ENSECAP00000037052"/>
<dbReference type="GeneID" id="100033875"/>
<dbReference type="KEGG" id="ecb:100033875"/>
<dbReference type="CTD" id="1910"/>
<dbReference type="InParanoid" id="O62709"/>
<dbReference type="OrthoDB" id="10037617at2759"/>
<dbReference type="Proteomes" id="UP000002281">
    <property type="component" value="Unplaced"/>
</dbReference>
<dbReference type="GO" id="GO:0005886">
    <property type="term" value="C:plasma membrane"/>
    <property type="evidence" value="ECO:0000250"/>
    <property type="project" value="UniProtKB"/>
</dbReference>
<dbReference type="GO" id="GO:0004962">
    <property type="term" value="F:endothelin receptor activity"/>
    <property type="evidence" value="ECO:0000250"/>
    <property type="project" value="UniProtKB"/>
</dbReference>
<dbReference type="GO" id="GO:0019722">
    <property type="term" value="P:calcium-mediated signaling"/>
    <property type="evidence" value="ECO:0000250"/>
    <property type="project" value="UniProtKB"/>
</dbReference>
<dbReference type="GO" id="GO:0048066">
    <property type="term" value="P:developmental pigmentation"/>
    <property type="evidence" value="ECO:0000318"/>
    <property type="project" value="GO_Central"/>
</dbReference>
<dbReference type="GO" id="GO:0086100">
    <property type="term" value="P:endothelin receptor signaling pathway"/>
    <property type="evidence" value="ECO:0000250"/>
    <property type="project" value="UniProtKB"/>
</dbReference>
<dbReference type="GO" id="GO:0048484">
    <property type="term" value="P:enteric nervous system development"/>
    <property type="evidence" value="ECO:0007669"/>
    <property type="project" value="InterPro"/>
</dbReference>
<dbReference type="GO" id="GO:0008217">
    <property type="term" value="P:regulation of blood pressure"/>
    <property type="evidence" value="ECO:0007669"/>
    <property type="project" value="InterPro"/>
</dbReference>
<dbReference type="GO" id="GO:0042310">
    <property type="term" value="P:vasoconstriction"/>
    <property type="evidence" value="ECO:0000318"/>
    <property type="project" value="GO_Central"/>
</dbReference>
<dbReference type="CDD" id="cd15976">
    <property type="entry name" value="7tmA_ET-BR"/>
    <property type="match status" value="1"/>
</dbReference>
<dbReference type="FunFam" id="1.20.1070.10:FF:000076">
    <property type="entry name" value="Endothelin receptor type B"/>
    <property type="match status" value="1"/>
</dbReference>
<dbReference type="Gene3D" id="1.20.1070.10">
    <property type="entry name" value="Rhodopsin 7-helix transmembrane proteins"/>
    <property type="match status" value="1"/>
</dbReference>
<dbReference type="InterPro" id="IPR000499">
    <property type="entry name" value="Endthln_rcpt"/>
</dbReference>
<dbReference type="InterPro" id="IPR001112">
    <property type="entry name" value="ETB_rcpt"/>
</dbReference>
<dbReference type="InterPro" id="IPR051193">
    <property type="entry name" value="GPCR_endothelin_rcpt"/>
</dbReference>
<dbReference type="InterPro" id="IPR000276">
    <property type="entry name" value="GPCR_Rhodpsn"/>
</dbReference>
<dbReference type="InterPro" id="IPR017452">
    <property type="entry name" value="GPCR_Rhodpsn_7TM"/>
</dbReference>
<dbReference type="PANTHER" id="PTHR46099:SF3">
    <property type="entry name" value="ENDOTHELIN RECEPTOR TYPE B"/>
    <property type="match status" value="1"/>
</dbReference>
<dbReference type="PANTHER" id="PTHR46099">
    <property type="entry name" value="G_PROTEIN_RECEP_F1_2 DOMAIN-CONTAINING PROTEIN"/>
    <property type="match status" value="1"/>
</dbReference>
<dbReference type="Pfam" id="PF00001">
    <property type="entry name" value="7tm_1"/>
    <property type="match status" value="1"/>
</dbReference>
<dbReference type="PRINTS" id="PR00571">
    <property type="entry name" value="ENDOTHELINBR"/>
</dbReference>
<dbReference type="PRINTS" id="PR00366">
    <property type="entry name" value="ENDOTHELINR"/>
</dbReference>
<dbReference type="PRINTS" id="PR00237">
    <property type="entry name" value="GPCRRHODOPSN"/>
</dbReference>
<dbReference type="SMART" id="SM01381">
    <property type="entry name" value="7TM_GPCR_Srsx"/>
    <property type="match status" value="1"/>
</dbReference>
<dbReference type="SUPFAM" id="SSF81321">
    <property type="entry name" value="Family A G protein-coupled receptor-like"/>
    <property type="match status" value="1"/>
</dbReference>
<dbReference type="PROSITE" id="PS00237">
    <property type="entry name" value="G_PROTEIN_RECEP_F1_1"/>
    <property type="match status" value="1"/>
</dbReference>
<dbReference type="PROSITE" id="PS50262">
    <property type="entry name" value="G_PROTEIN_RECEP_F1_2"/>
    <property type="match status" value="1"/>
</dbReference>
<name>EDNRB_HORSE</name>
<comment type="function">
    <text>Non-specific receptor for endothelin 1, 2, and 3. Mediates its action by association with G proteins that activate a phosphatidylinositol-calcium second messenger system.</text>
</comment>
<comment type="subcellular location">
    <subcellularLocation>
        <location evidence="1">Cell membrane</location>
        <topology>Multi-pass membrane protein</topology>
    </subcellularLocation>
    <text evidence="1">internalized after activation by endothelins.</text>
</comment>
<comment type="disease">
    <text evidence="6 7">Defects in EDNRB are a cause of overo lethal white syndrome (OLWS) also known as lethal white foal syndrome (LWFS). It is an inherited syndrome of foals born to American paint horse parents of the overo coat-pattern lineage. Affected foals are totally or almost totally white and die within days from complications due to intestinal aganglionosis.</text>
</comment>
<comment type="similarity">
    <text evidence="4">Belongs to the G-protein coupled receptor 1 family. Endothelin receptor subfamily. EDNRB sub-subfamily.</text>
</comment>